<feature type="chain" id="PRO_0000250021" description="Anhydro-N-acetylmuramic acid kinase">
    <location>
        <begin position="1"/>
        <end position="375"/>
    </location>
</feature>
<feature type="binding site" evidence="1">
    <location>
        <begin position="13"/>
        <end position="20"/>
    </location>
    <ligand>
        <name>ATP</name>
        <dbReference type="ChEBI" id="CHEBI:30616"/>
    </ligand>
</feature>
<keyword id="KW-0067">ATP-binding</keyword>
<keyword id="KW-0119">Carbohydrate metabolism</keyword>
<keyword id="KW-0418">Kinase</keyword>
<keyword id="KW-0547">Nucleotide-binding</keyword>
<keyword id="KW-1185">Reference proteome</keyword>
<keyword id="KW-0808">Transferase</keyword>
<proteinExistence type="inferred from homology"/>
<dbReference type="EC" id="2.7.1.170" evidence="1"/>
<dbReference type="EMBL" id="CP000084">
    <property type="protein sequence ID" value="AAZ21555.1"/>
    <property type="molecule type" value="Genomic_DNA"/>
</dbReference>
<dbReference type="RefSeq" id="WP_011281904.1">
    <property type="nucleotide sequence ID" value="NC_007205.1"/>
</dbReference>
<dbReference type="SMR" id="Q4FMN4"/>
<dbReference type="STRING" id="335992.SAR11_0736"/>
<dbReference type="GeneID" id="66295239"/>
<dbReference type="KEGG" id="pub:SAR11_0736"/>
<dbReference type="eggNOG" id="COG2377">
    <property type="taxonomic scope" value="Bacteria"/>
</dbReference>
<dbReference type="HOGENOM" id="CLU_038782_3_0_5"/>
<dbReference type="OrthoDB" id="9763949at2"/>
<dbReference type="UniPathway" id="UPA00343"/>
<dbReference type="UniPathway" id="UPA00544"/>
<dbReference type="Proteomes" id="UP000002528">
    <property type="component" value="Chromosome"/>
</dbReference>
<dbReference type="GO" id="GO:0005524">
    <property type="term" value="F:ATP binding"/>
    <property type="evidence" value="ECO:0007669"/>
    <property type="project" value="UniProtKB-UniRule"/>
</dbReference>
<dbReference type="GO" id="GO:0016301">
    <property type="term" value="F:kinase activity"/>
    <property type="evidence" value="ECO:0007669"/>
    <property type="project" value="UniProtKB-KW"/>
</dbReference>
<dbReference type="GO" id="GO:0016773">
    <property type="term" value="F:phosphotransferase activity, alcohol group as acceptor"/>
    <property type="evidence" value="ECO:0007669"/>
    <property type="project" value="UniProtKB-UniRule"/>
</dbReference>
<dbReference type="GO" id="GO:0097175">
    <property type="term" value="P:1,6-anhydro-N-acetyl-beta-muramic acid catabolic process"/>
    <property type="evidence" value="ECO:0007669"/>
    <property type="project" value="UniProtKB-UniRule"/>
</dbReference>
<dbReference type="GO" id="GO:0006040">
    <property type="term" value="P:amino sugar metabolic process"/>
    <property type="evidence" value="ECO:0007669"/>
    <property type="project" value="InterPro"/>
</dbReference>
<dbReference type="GO" id="GO:0009254">
    <property type="term" value="P:peptidoglycan turnover"/>
    <property type="evidence" value="ECO:0007669"/>
    <property type="project" value="UniProtKB-UniRule"/>
</dbReference>
<dbReference type="Gene3D" id="3.30.420.40">
    <property type="match status" value="2"/>
</dbReference>
<dbReference type="HAMAP" id="MF_01270">
    <property type="entry name" value="AnhMurNAc_kinase"/>
    <property type="match status" value="1"/>
</dbReference>
<dbReference type="InterPro" id="IPR005338">
    <property type="entry name" value="Anhydro_N_Ac-Mur_kinase"/>
</dbReference>
<dbReference type="InterPro" id="IPR043129">
    <property type="entry name" value="ATPase_NBD"/>
</dbReference>
<dbReference type="NCBIfam" id="NF007141">
    <property type="entry name" value="PRK09585.1-5"/>
    <property type="match status" value="1"/>
</dbReference>
<dbReference type="PANTHER" id="PTHR30605">
    <property type="entry name" value="ANHYDRO-N-ACETYLMURAMIC ACID KINASE"/>
    <property type="match status" value="1"/>
</dbReference>
<dbReference type="PANTHER" id="PTHR30605:SF0">
    <property type="entry name" value="ANHYDRO-N-ACETYLMURAMIC ACID KINASE"/>
    <property type="match status" value="1"/>
</dbReference>
<dbReference type="Pfam" id="PF03702">
    <property type="entry name" value="AnmK"/>
    <property type="match status" value="1"/>
</dbReference>
<dbReference type="SUPFAM" id="SSF53067">
    <property type="entry name" value="Actin-like ATPase domain"/>
    <property type="match status" value="1"/>
</dbReference>
<accession>Q4FMN4</accession>
<name>ANMK_PELUB</name>
<reference key="1">
    <citation type="journal article" date="2005" name="Science">
        <title>Genome streamlining in a cosmopolitan oceanic bacterium.</title>
        <authorList>
            <person name="Giovannoni S.J."/>
            <person name="Tripp H.J."/>
            <person name="Givan S."/>
            <person name="Podar M."/>
            <person name="Vergin K.L."/>
            <person name="Baptista D."/>
            <person name="Bibbs L."/>
            <person name="Eads J."/>
            <person name="Richardson T.H."/>
            <person name="Noordewier M."/>
            <person name="Rappe M.S."/>
            <person name="Short J.M."/>
            <person name="Carrington J.C."/>
            <person name="Mathur E.J."/>
        </authorList>
    </citation>
    <scope>NUCLEOTIDE SEQUENCE [LARGE SCALE GENOMIC DNA]</scope>
    <source>
        <strain>HTCC1062</strain>
    </source>
</reference>
<gene>
    <name evidence="1" type="primary">anmK</name>
    <name type="ordered locus">SAR11_0736</name>
</gene>
<comment type="function">
    <text evidence="1">Catalyzes the specific phosphorylation of 1,6-anhydro-N-acetylmuramic acid (anhMurNAc) with the simultaneous cleavage of the 1,6-anhydro ring, generating MurNAc-6-P. Is required for the utilization of anhMurNAc either imported from the medium or derived from its own cell wall murein, and thus plays a role in cell wall recycling.</text>
</comment>
<comment type="catalytic activity">
    <reaction evidence="1">
        <text>1,6-anhydro-N-acetyl-beta-muramate + ATP + H2O = N-acetyl-D-muramate 6-phosphate + ADP + H(+)</text>
        <dbReference type="Rhea" id="RHEA:24952"/>
        <dbReference type="ChEBI" id="CHEBI:15377"/>
        <dbReference type="ChEBI" id="CHEBI:15378"/>
        <dbReference type="ChEBI" id="CHEBI:30616"/>
        <dbReference type="ChEBI" id="CHEBI:58690"/>
        <dbReference type="ChEBI" id="CHEBI:58722"/>
        <dbReference type="ChEBI" id="CHEBI:456216"/>
        <dbReference type="EC" id="2.7.1.170"/>
    </reaction>
</comment>
<comment type="pathway">
    <text evidence="1">Amino-sugar metabolism; 1,6-anhydro-N-acetylmuramate degradation.</text>
</comment>
<comment type="pathway">
    <text evidence="1">Cell wall biogenesis; peptidoglycan recycling.</text>
</comment>
<comment type="similarity">
    <text evidence="1">Belongs to the anhydro-N-acetylmuramic acid kinase family.</text>
</comment>
<organism>
    <name type="scientific">Pelagibacter ubique (strain HTCC1062)</name>
    <dbReference type="NCBI Taxonomy" id="335992"/>
    <lineage>
        <taxon>Bacteria</taxon>
        <taxon>Pseudomonadati</taxon>
        <taxon>Pseudomonadota</taxon>
        <taxon>Alphaproteobacteria</taxon>
        <taxon>Candidatus Pelagibacterales</taxon>
        <taxon>Candidatus Pelagibacteraceae</taxon>
        <taxon>Candidatus Pelagibacter</taxon>
    </lineage>
</organism>
<protein>
    <recommendedName>
        <fullName evidence="1">Anhydro-N-acetylmuramic acid kinase</fullName>
        <ecNumber evidence="1">2.7.1.170</ecNumber>
    </recommendedName>
    <alternativeName>
        <fullName evidence="1">AnhMurNAc kinase</fullName>
    </alternativeName>
</protein>
<evidence type="ECO:0000255" key="1">
    <source>
        <dbReference type="HAMAP-Rule" id="MF_01270"/>
    </source>
</evidence>
<sequence length="375" mass="42064">MEKFYTSLGLMSGTSMDGVDASIIRSDGESNYEPIFDKYFEYDGVIYSNLLNLRDKINSIKDLQDNSYQINELERKITLFHAKISKEIIKNAGVDVDIVGFHGQTIFHNAQEKISKQIGDGNLLSSLLKKNVVYNFRENDIHNGGQGAPLAPIFHNLLINQNKIEKPACVLNIGGIANITLVISKNNEDLKSFDVGPGNCLLDEWVRRHTQMKYDENGKASNLGKTSEVILNQAIDNFDNISNQKKLSFDIKDFDLSFVKGLTYEDGLSTLVDFTAIIIYQSILKSINSEENKKLLIIVCGGGRKNLSLMESIRKRLPKNIYLKIIDDYKVDGDFIESQAFAYLAIRSALKKVISFPNTTNVKKPSIGGVLVKNY</sequence>